<feature type="chain" id="PRO_0000125530" description="Small nuclear ribonucleoprotein E">
    <location>
        <begin position="1"/>
        <end position="92"/>
    </location>
</feature>
<feature type="domain" description="Sm" evidence="2">
    <location>
        <begin position="18"/>
        <end position="92"/>
    </location>
</feature>
<accession>P62305</accession>
<accession>P08578</accession>
<accession>Q15498</accession>
<organism>
    <name type="scientific">Mus musculus</name>
    <name type="common">Mouse</name>
    <dbReference type="NCBI Taxonomy" id="10090"/>
    <lineage>
        <taxon>Eukaryota</taxon>
        <taxon>Metazoa</taxon>
        <taxon>Chordata</taxon>
        <taxon>Craniata</taxon>
        <taxon>Vertebrata</taxon>
        <taxon>Euteleostomi</taxon>
        <taxon>Mammalia</taxon>
        <taxon>Eutheria</taxon>
        <taxon>Euarchontoglires</taxon>
        <taxon>Glires</taxon>
        <taxon>Rodentia</taxon>
        <taxon>Myomorpha</taxon>
        <taxon>Muroidea</taxon>
        <taxon>Muridae</taxon>
        <taxon>Murinae</taxon>
        <taxon>Mus</taxon>
        <taxon>Mus</taxon>
    </lineage>
</organism>
<proteinExistence type="evidence at protein level"/>
<keyword id="KW-0963">Cytoplasm</keyword>
<keyword id="KW-0507">mRNA processing</keyword>
<keyword id="KW-0508">mRNA splicing</keyword>
<keyword id="KW-0539">Nucleus</keyword>
<keyword id="KW-1185">Reference proteome</keyword>
<keyword id="KW-0687">Ribonucleoprotein</keyword>
<keyword id="KW-0694">RNA-binding</keyword>
<keyword id="KW-0747">Spliceosome</keyword>
<gene>
    <name type="primary">Snrpe</name>
</gene>
<comment type="function">
    <text evidence="1">Plays a role in pre-mRNA splicing as a core component of the spliceosomal U1, U2, U4 and U5 small nuclear ribonucleoproteins (snRNPs), the building blocks of the spliceosome. Component of both the pre-catalytic spliceosome B complex and activated spliceosome C complexes. As a component of the minor spliceosome, involved in the splicing of U12-type introns in pre-mRNAs. As part of the U7 snRNP it is involved in histone 3'-end processing.</text>
</comment>
<comment type="subunit">
    <text evidence="1">Core component of the spliceosomal U1, U2, U4 and U5 small nuclear ribonucleoproteins (snRNPs), the building blocks of the spliceosome. Most spliceosomal snRNPs contain a common set of Sm proteins, SNRPB, SNRPD1, SNRPD2, SNRPD3, SNRPE, SNRPF and SNRPG that assemble in a heptameric protein ring on the Sm site of the small nuclear RNA to form the core snRNP. Component of the U1 snRNP. The U1 snRNP is composed of the U1 snRNA and the 7 core Sm proteins SNRPB, SNRPD1, SNRPD2, SNRPD3, SNRPE, SNRPF and SNRPG, and at least three U1 snRNP-specific proteins SNRNP70/U1-70K, SNRPA/U1-A and SNRPC/U1-C. Component of the U4/U6-U5 tri-snRNP complex composed of the U4, U6 and U5 snRNAs and at least PRPF3, PRPF4, PRPF6, PRPF8, PRPF31, SNRNP200, TXNL4A, SNRNP40, SNRPB, SNRPD1, SNRPD2, SNRPD3, SNRPE, SNRPF, SNRPG, DDX23, CD2BP2, PPIH, SNU13, EFTUD2, SART1 and USP39, plus LSM2, LSM3, LSM4, LSM5, LSM6, LSM7 and LSM8. Component of the U7 snRNP complex, or U7 Sm protein core complex, that is composed of the U7 snRNA and at least LSM10, LSM11, SNRPB, SNRPD3, SNRPE, SNRPF and SNRPG; the complex does not contain SNRPD1 and SNRPD2. Component of the minor spliceosome, which splices U12-type introns. Part of the SMN-Sm complex that contains SMN1, GEMIN2/SIP1, DDX20/GEMIN3, GEMIN4, GEMIN5, GEMIN6, GEMIN7, GEMIN8, STRAP/UNRIP and the Sm proteins SNRPB, SNRPD1, SNRPD2, SNRPD3, SNRPE, SNRPF and SNRPG; catalyzes core snRNPs assembly. Forms a 6S pICln-Sm complex composed of CLNS1A/pICln, SNRPD1, SNRPD2, SNRPE, SNRPF and SNRPG; ring-like structure where CLNS1A/pICln mimics additional Sm proteins and which is unable to assemble into the core snRNP. Interacts with SMN1; the interaction is direct. Interacts with GEMIN2 (via N-terminus); the interaction is direct. Interacts with SNRPF; the interaction is direct. Interacts with SNRPG; the interaction is direct.</text>
</comment>
<comment type="subcellular location">
    <subcellularLocation>
        <location evidence="1">Cytoplasm</location>
        <location evidence="1">Cytosol</location>
    </subcellularLocation>
    <subcellularLocation>
        <location evidence="1">Nucleus</location>
    </subcellularLocation>
    <text evidence="1">SMN-mediated assembly into core snRNPs occurs in the cytosol before SMN-mediated transport to the nucleus to be included in spliceosomes.</text>
</comment>
<comment type="similarity">
    <text evidence="3">Belongs to the snRNP Sm proteins family.</text>
</comment>
<reference key="1">
    <citation type="journal article" date="1992" name="Genomics">
        <title>Conservation of coding and transcriptional control sequences within the snRNP E protein gene.</title>
        <authorList>
            <person name="Fautsch M."/>
            <person name="Thompson M.A."/>
            <person name="Holicky E.L."/>
            <person name="Schultz P.J."/>
            <person name="Hallett J.B."/>
            <person name="Wieben E.D."/>
        </authorList>
    </citation>
    <scope>NUCLEOTIDE SEQUENCE [MRNA]</scope>
    <source>
        <tissue>Liver</tissue>
    </source>
</reference>
<reference key="2">
    <citation type="journal article" date="2005" name="Science">
        <title>The transcriptional landscape of the mammalian genome.</title>
        <authorList>
            <person name="Carninci P."/>
            <person name="Kasukawa T."/>
            <person name="Katayama S."/>
            <person name="Gough J."/>
            <person name="Frith M.C."/>
            <person name="Maeda N."/>
            <person name="Oyama R."/>
            <person name="Ravasi T."/>
            <person name="Lenhard B."/>
            <person name="Wells C."/>
            <person name="Kodzius R."/>
            <person name="Shimokawa K."/>
            <person name="Bajic V.B."/>
            <person name="Brenner S.E."/>
            <person name="Batalov S."/>
            <person name="Forrest A.R."/>
            <person name="Zavolan M."/>
            <person name="Davis M.J."/>
            <person name="Wilming L.G."/>
            <person name="Aidinis V."/>
            <person name="Allen J.E."/>
            <person name="Ambesi-Impiombato A."/>
            <person name="Apweiler R."/>
            <person name="Aturaliya R.N."/>
            <person name="Bailey T.L."/>
            <person name="Bansal M."/>
            <person name="Baxter L."/>
            <person name="Beisel K.W."/>
            <person name="Bersano T."/>
            <person name="Bono H."/>
            <person name="Chalk A.M."/>
            <person name="Chiu K.P."/>
            <person name="Choudhary V."/>
            <person name="Christoffels A."/>
            <person name="Clutterbuck D.R."/>
            <person name="Crowe M.L."/>
            <person name="Dalla E."/>
            <person name="Dalrymple B.P."/>
            <person name="de Bono B."/>
            <person name="Della Gatta G."/>
            <person name="di Bernardo D."/>
            <person name="Down T."/>
            <person name="Engstrom P."/>
            <person name="Fagiolini M."/>
            <person name="Faulkner G."/>
            <person name="Fletcher C.F."/>
            <person name="Fukushima T."/>
            <person name="Furuno M."/>
            <person name="Futaki S."/>
            <person name="Gariboldi M."/>
            <person name="Georgii-Hemming P."/>
            <person name="Gingeras T.R."/>
            <person name="Gojobori T."/>
            <person name="Green R.E."/>
            <person name="Gustincich S."/>
            <person name="Harbers M."/>
            <person name="Hayashi Y."/>
            <person name="Hensch T.K."/>
            <person name="Hirokawa N."/>
            <person name="Hill D."/>
            <person name="Huminiecki L."/>
            <person name="Iacono M."/>
            <person name="Ikeo K."/>
            <person name="Iwama A."/>
            <person name="Ishikawa T."/>
            <person name="Jakt M."/>
            <person name="Kanapin A."/>
            <person name="Katoh M."/>
            <person name="Kawasawa Y."/>
            <person name="Kelso J."/>
            <person name="Kitamura H."/>
            <person name="Kitano H."/>
            <person name="Kollias G."/>
            <person name="Krishnan S.P."/>
            <person name="Kruger A."/>
            <person name="Kummerfeld S.K."/>
            <person name="Kurochkin I.V."/>
            <person name="Lareau L.F."/>
            <person name="Lazarevic D."/>
            <person name="Lipovich L."/>
            <person name="Liu J."/>
            <person name="Liuni S."/>
            <person name="McWilliam S."/>
            <person name="Madan Babu M."/>
            <person name="Madera M."/>
            <person name="Marchionni L."/>
            <person name="Matsuda H."/>
            <person name="Matsuzawa S."/>
            <person name="Miki H."/>
            <person name="Mignone F."/>
            <person name="Miyake S."/>
            <person name="Morris K."/>
            <person name="Mottagui-Tabar S."/>
            <person name="Mulder N."/>
            <person name="Nakano N."/>
            <person name="Nakauchi H."/>
            <person name="Ng P."/>
            <person name="Nilsson R."/>
            <person name="Nishiguchi S."/>
            <person name="Nishikawa S."/>
            <person name="Nori F."/>
            <person name="Ohara O."/>
            <person name="Okazaki Y."/>
            <person name="Orlando V."/>
            <person name="Pang K.C."/>
            <person name="Pavan W.J."/>
            <person name="Pavesi G."/>
            <person name="Pesole G."/>
            <person name="Petrovsky N."/>
            <person name="Piazza S."/>
            <person name="Reed J."/>
            <person name="Reid J.F."/>
            <person name="Ring B.Z."/>
            <person name="Ringwald M."/>
            <person name="Rost B."/>
            <person name="Ruan Y."/>
            <person name="Salzberg S.L."/>
            <person name="Sandelin A."/>
            <person name="Schneider C."/>
            <person name="Schoenbach C."/>
            <person name="Sekiguchi K."/>
            <person name="Semple C.A."/>
            <person name="Seno S."/>
            <person name="Sessa L."/>
            <person name="Sheng Y."/>
            <person name="Shibata Y."/>
            <person name="Shimada H."/>
            <person name="Shimada K."/>
            <person name="Silva D."/>
            <person name="Sinclair B."/>
            <person name="Sperling S."/>
            <person name="Stupka E."/>
            <person name="Sugiura K."/>
            <person name="Sultana R."/>
            <person name="Takenaka Y."/>
            <person name="Taki K."/>
            <person name="Tammoja K."/>
            <person name="Tan S.L."/>
            <person name="Tang S."/>
            <person name="Taylor M.S."/>
            <person name="Tegner J."/>
            <person name="Teichmann S.A."/>
            <person name="Ueda H.R."/>
            <person name="van Nimwegen E."/>
            <person name="Verardo R."/>
            <person name="Wei C.L."/>
            <person name="Yagi K."/>
            <person name="Yamanishi H."/>
            <person name="Zabarovsky E."/>
            <person name="Zhu S."/>
            <person name="Zimmer A."/>
            <person name="Hide W."/>
            <person name="Bult C."/>
            <person name="Grimmond S.M."/>
            <person name="Teasdale R.D."/>
            <person name="Liu E.T."/>
            <person name="Brusic V."/>
            <person name="Quackenbush J."/>
            <person name="Wahlestedt C."/>
            <person name="Mattick J.S."/>
            <person name="Hume D.A."/>
            <person name="Kai C."/>
            <person name="Sasaki D."/>
            <person name="Tomaru Y."/>
            <person name="Fukuda S."/>
            <person name="Kanamori-Katayama M."/>
            <person name="Suzuki M."/>
            <person name="Aoki J."/>
            <person name="Arakawa T."/>
            <person name="Iida J."/>
            <person name="Imamura K."/>
            <person name="Itoh M."/>
            <person name="Kato T."/>
            <person name="Kawaji H."/>
            <person name="Kawagashira N."/>
            <person name="Kawashima T."/>
            <person name="Kojima M."/>
            <person name="Kondo S."/>
            <person name="Konno H."/>
            <person name="Nakano K."/>
            <person name="Ninomiya N."/>
            <person name="Nishio T."/>
            <person name="Okada M."/>
            <person name="Plessy C."/>
            <person name="Shibata K."/>
            <person name="Shiraki T."/>
            <person name="Suzuki S."/>
            <person name="Tagami M."/>
            <person name="Waki K."/>
            <person name="Watahiki A."/>
            <person name="Okamura-Oho Y."/>
            <person name="Suzuki H."/>
            <person name="Kawai J."/>
            <person name="Hayashizaki Y."/>
        </authorList>
    </citation>
    <scope>NUCLEOTIDE SEQUENCE [LARGE SCALE MRNA]</scope>
    <source>
        <strain>C57BL/6J</strain>
        <tissue>Placenta</tissue>
    </source>
</reference>
<reference key="3">
    <citation type="journal article" date="2004" name="Genome Res.">
        <title>The status, quality, and expansion of the NIH full-length cDNA project: the Mammalian Gene Collection (MGC).</title>
        <authorList>
            <consortium name="The MGC Project Team"/>
        </authorList>
    </citation>
    <scope>NUCLEOTIDE SEQUENCE [LARGE SCALE MRNA]</scope>
    <source>
        <strain>C57BL/6J</strain>
        <tissue>Brain</tissue>
        <tissue>Mammary tumor</tissue>
    </source>
</reference>
<reference key="4">
    <citation type="journal article" date="2010" name="Cell">
        <title>A tissue-specific atlas of mouse protein phosphorylation and expression.</title>
        <authorList>
            <person name="Huttlin E.L."/>
            <person name="Jedrychowski M.P."/>
            <person name="Elias J.E."/>
            <person name="Goswami T."/>
            <person name="Rad R."/>
            <person name="Beausoleil S.A."/>
            <person name="Villen J."/>
            <person name="Haas W."/>
            <person name="Sowa M.E."/>
            <person name="Gygi S.P."/>
        </authorList>
    </citation>
    <scope>IDENTIFICATION BY MASS SPECTROMETRY [LARGE SCALE ANALYSIS]</scope>
    <source>
        <tissue>Brain</tissue>
        <tissue>Brown adipose tissue</tissue>
        <tissue>Kidney</tissue>
        <tissue>Liver</tissue>
        <tissue>Lung</tissue>
        <tissue>Pancreas</tissue>
        <tissue>Spleen</tissue>
        <tissue>Testis</tissue>
    </source>
</reference>
<name>RUXE_MOUSE</name>
<sequence length="92" mass="10804">MAYRGQGQKVQKVMVQPINLIFRYLQNRSRIQVWLYEQVNMRIEGCIIGFDEYMNLVLDDAEEIHSKTKSRKQLGRIMLKGDNITLLQSVSN</sequence>
<evidence type="ECO:0000250" key="1">
    <source>
        <dbReference type="UniProtKB" id="P62304"/>
    </source>
</evidence>
<evidence type="ECO:0000255" key="2">
    <source>
        <dbReference type="PROSITE-ProRule" id="PRU01346"/>
    </source>
</evidence>
<evidence type="ECO:0000305" key="3"/>
<protein>
    <recommendedName>
        <fullName>Small nuclear ribonucleoprotein E</fullName>
        <shortName>snRNP-E</shortName>
    </recommendedName>
    <alternativeName>
        <fullName>Sm protein E</fullName>
        <shortName>Sm-E</shortName>
        <shortName>SmE</shortName>
    </alternativeName>
</protein>
<dbReference type="EMBL" id="X65703">
    <property type="protein sequence ID" value="CAA46625.1"/>
    <property type="status" value="ALT_SEQ"/>
    <property type="molecule type" value="Genomic_DNA"/>
</dbReference>
<dbReference type="EMBL" id="X65704">
    <property type="protein sequence ID" value="CAA46626.1"/>
    <property type="molecule type" value="mRNA"/>
</dbReference>
<dbReference type="EMBL" id="AK019462">
    <property type="protein sequence ID" value="BAB31734.1"/>
    <property type="molecule type" value="mRNA"/>
</dbReference>
<dbReference type="EMBL" id="BC008262">
    <property type="protein sequence ID" value="AAH08262.1"/>
    <property type="molecule type" value="mRNA"/>
</dbReference>
<dbReference type="EMBL" id="BC051207">
    <property type="protein sequence ID" value="AAH51207.1"/>
    <property type="molecule type" value="mRNA"/>
</dbReference>
<dbReference type="EMBL" id="BC055765">
    <property type="protein sequence ID" value="AAH55765.1"/>
    <property type="molecule type" value="mRNA"/>
</dbReference>
<dbReference type="CCDS" id="CCDS48364.1"/>
<dbReference type="PIR" id="I48778">
    <property type="entry name" value="I48778"/>
</dbReference>
<dbReference type="RefSeq" id="NP_033253.1">
    <property type="nucleotide sequence ID" value="NM_009227.3"/>
</dbReference>
<dbReference type="SMR" id="P62305"/>
<dbReference type="BioGRID" id="203380">
    <property type="interactions" value="32"/>
</dbReference>
<dbReference type="FunCoup" id="P62305">
    <property type="interactions" value="2590"/>
</dbReference>
<dbReference type="IntAct" id="P62305">
    <property type="interactions" value="4"/>
</dbReference>
<dbReference type="MINT" id="P62305"/>
<dbReference type="STRING" id="10090.ENSMUSP00000128400"/>
<dbReference type="iPTMnet" id="P62305"/>
<dbReference type="PhosphoSitePlus" id="P62305"/>
<dbReference type="SwissPalm" id="P62305"/>
<dbReference type="jPOST" id="P62305"/>
<dbReference type="PaxDb" id="10090-ENSMUSP00000128400"/>
<dbReference type="PeptideAtlas" id="P62305"/>
<dbReference type="ProteomicsDB" id="256664"/>
<dbReference type="Pumba" id="P62305"/>
<dbReference type="TopDownProteomics" id="P62305"/>
<dbReference type="Antibodypedia" id="53843">
    <property type="antibodies" value="199 antibodies from 24 providers"/>
</dbReference>
<dbReference type="DNASU" id="20643"/>
<dbReference type="Ensembl" id="ENSMUST00000166915.8">
    <property type="protein sequence ID" value="ENSMUSP00000128400.2"/>
    <property type="gene ID" value="ENSMUSG00000090553.9"/>
</dbReference>
<dbReference type="GeneID" id="20643"/>
<dbReference type="KEGG" id="mmu:20643"/>
<dbReference type="UCSC" id="uc007cql.2">
    <property type="organism name" value="mouse"/>
</dbReference>
<dbReference type="AGR" id="MGI:98346"/>
<dbReference type="CTD" id="6635"/>
<dbReference type="MGI" id="MGI:98346">
    <property type="gene designation" value="Snrpe"/>
</dbReference>
<dbReference type="VEuPathDB" id="HostDB:ENSMUSG00000090553"/>
<dbReference type="eggNOG" id="KOG1774">
    <property type="taxonomic scope" value="Eukaryota"/>
</dbReference>
<dbReference type="GeneTree" id="ENSGT00390000012818"/>
<dbReference type="HOGENOM" id="CLU_125186_1_0_1"/>
<dbReference type="InParanoid" id="P62305"/>
<dbReference type="OMA" id="VPPINCI"/>
<dbReference type="OrthoDB" id="25620at2759"/>
<dbReference type="PhylomeDB" id="P62305"/>
<dbReference type="TreeFam" id="TF314419"/>
<dbReference type="Reactome" id="R-MMU-111367">
    <property type="pathway name" value="SLBP independent Processing of Histone Pre-mRNAs"/>
</dbReference>
<dbReference type="Reactome" id="R-MMU-191859">
    <property type="pathway name" value="snRNP Assembly"/>
</dbReference>
<dbReference type="Reactome" id="R-MMU-72163">
    <property type="pathway name" value="mRNA Splicing - Major Pathway"/>
</dbReference>
<dbReference type="Reactome" id="R-MMU-72165">
    <property type="pathway name" value="mRNA Splicing - Minor Pathway"/>
</dbReference>
<dbReference type="Reactome" id="R-MMU-73856">
    <property type="pathway name" value="RNA Polymerase II Transcription Termination"/>
</dbReference>
<dbReference type="Reactome" id="R-MMU-77588">
    <property type="pathway name" value="SLBP Dependent Processing of Replication-Dependent Histone Pre-mRNAs"/>
</dbReference>
<dbReference type="BioGRID-ORCS" id="20643">
    <property type="hits" value="38 hits in 116 CRISPR screens"/>
</dbReference>
<dbReference type="ChiTaRS" id="Snrpe">
    <property type="organism name" value="mouse"/>
</dbReference>
<dbReference type="EvolutionaryTrace" id="P62305"/>
<dbReference type="PRO" id="PR:P62305"/>
<dbReference type="Proteomes" id="UP000000589">
    <property type="component" value="Chromosome 1"/>
</dbReference>
<dbReference type="RNAct" id="P62305">
    <property type="molecule type" value="protein"/>
</dbReference>
<dbReference type="Bgee" id="ENSMUSG00000090553">
    <property type="expression patterns" value="Expressed in medial ganglionic eminence and 255 other cell types or tissues"/>
</dbReference>
<dbReference type="ExpressionAtlas" id="P62305">
    <property type="expression patterns" value="baseline and differential"/>
</dbReference>
<dbReference type="GO" id="GO:0005829">
    <property type="term" value="C:cytosol"/>
    <property type="evidence" value="ECO:0000250"/>
    <property type="project" value="UniProtKB"/>
</dbReference>
<dbReference type="GO" id="GO:0034709">
    <property type="term" value="C:methylosome"/>
    <property type="evidence" value="ECO:0000250"/>
    <property type="project" value="UniProtKB"/>
</dbReference>
<dbReference type="GO" id="GO:0005634">
    <property type="term" value="C:nucleus"/>
    <property type="evidence" value="ECO:0000250"/>
    <property type="project" value="UniProtKB"/>
</dbReference>
<dbReference type="GO" id="GO:0034715">
    <property type="term" value="C:pICln-Sm protein complex"/>
    <property type="evidence" value="ECO:0000250"/>
    <property type="project" value="UniProtKB"/>
</dbReference>
<dbReference type="GO" id="GO:0034719">
    <property type="term" value="C:SMN-Sm protein complex"/>
    <property type="evidence" value="ECO:0000250"/>
    <property type="project" value="UniProtKB"/>
</dbReference>
<dbReference type="GO" id="GO:0005685">
    <property type="term" value="C:U1 snRNP"/>
    <property type="evidence" value="ECO:0000250"/>
    <property type="project" value="UniProtKB"/>
</dbReference>
<dbReference type="GO" id="GO:0071007">
    <property type="term" value="C:U2-type catalytic step 2 spliceosome"/>
    <property type="evidence" value="ECO:0000250"/>
    <property type="project" value="UniProtKB"/>
</dbReference>
<dbReference type="GO" id="GO:0071005">
    <property type="term" value="C:U2-type precatalytic spliceosome"/>
    <property type="evidence" value="ECO:0000250"/>
    <property type="project" value="UniProtKB"/>
</dbReference>
<dbReference type="GO" id="GO:0005684">
    <property type="term" value="C:U2-type spliceosomal complex"/>
    <property type="evidence" value="ECO:0000250"/>
    <property type="project" value="UniProtKB"/>
</dbReference>
<dbReference type="GO" id="GO:0005687">
    <property type="term" value="C:U4 snRNP"/>
    <property type="evidence" value="ECO:0000250"/>
    <property type="project" value="UniProtKB"/>
</dbReference>
<dbReference type="GO" id="GO:0046540">
    <property type="term" value="C:U4/U6 x U5 tri-snRNP complex"/>
    <property type="evidence" value="ECO:0000250"/>
    <property type="project" value="UniProtKB"/>
</dbReference>
<dbReference type="GO" id="GO:0005683">
    <property type="term" value="C:U7 snRNP"/>
    <property type="evidence" value="ECO:0000250"/>
    <property type="project" value="UniProtKB"/>
</dbReference>
<dbReference type="GO" id="GO:0003723">
    <property type="term" value="F:RNA binding"/>
    <property type="evidence" value="ECO:0007669"/>
    <property type="project" value="UniProtKB-KW"/>
</dbReference>
<dbReference type="GO" id="GO:0000398">
    <property type="term" value="P:mRNA splicing, via spliceosome"/>
    <property type="evidence" value="ECO:0000250"/>
    <property type="project" value="UniProtKB"/>
</dbReference>
<dbReference type="GO" id="GO:0000387">
    <property type="term" value="P:spliceosomal snRNP assembly"/>
    <property type="evidence" value="ECO:0000250"/>
    <property type="project" value="UniProtKB"/>
</dbReference>
<dbReference type="CDD" id="cd01718">
    <property type="entry name" value="Sm_E"/>
    <property type="match status" value="1"/>
</dbReference>
<dbReference type="FunFam" id="2.30.30.100:FF:000059">
    <property type="entry name" value="Small nuclear ribonucleoprotein E"/>
    <property type="match status" value="1"/>
</dbReference>
<dbReference type="Gene3D" id="2.30.30.100">
    <property type="match status" value="1"/>
</dbReference>
<dbReference type="InterPro" id="IPR010920">
    <property type="entry name" value="LSM_dom_sf"/>
</dbReference>
<dbReference type="InterPro" id="IPR047575">
    <property type="entry name" value="Sm"/>
</dbReference>
<dbReference type="InterPro" id="IPR001163">
    <property type="entry name" value="Sm_dom_euk/arc"/>
</dbReference>
<dbReference type="InterPro" id="IPR027078">
    <property type="entry name" value="snRNP-E"/>
</dbReference>
<dbReference type="PANTHER" id="PTHR11193">
    <property type="entry name" value="SMALL NUCLEAR RIBONUCLEOPROTEIN E"/>
    <property type="match status" value="1"/>
</dbReference>
<dbReference type="Pfam" id="PF01423">
    <property type="entry name" value="LSM"/>
    <property type="match status" value="1"/>
</dbReference>
<dbReference type="SMART" id="SM00651">
    <property type="entry name" value="Sm"/>
    <property type="match status" value="1"/>
</dbReference>
<dbReference type="SUPFAM" id="SSF50182">
    <property type="entry name" value="Sm-like ribonucleoproteins"/>
    <property type="match status" value="1"/>
</dbReference>
<dbReference type="PROSITE" id="PS52002">
    <property type="entry name" value="SM"/>
    <property type="match status" value="1"/>
</dbReference>